<feature type="chain" id="PRO_0000257903" description="Cytochrome b">
    <location>
        <begin position="1"/>
        <end position="379"/>
    </location>
</feature>
<feature type="transmembrane region" description="Helical" evidence="2">
    <location>
        <begin position="33"/>
        <end position="53"/>
    </location>
</feature>
<feature type="transmembrane region" description="Helical" evidence="2">
    <location>
        <begin position="77"/>
        <end position="98"/>
    </location>
</feature>
<feature type="transmembrane region" description="Helical" evidence="2">
    <location>
        <begin position="113"/>
        <end position="133"/>
    </location>
</feature>
<feature type="transmembrane region" description="Helical" evidence="2">
    <location>
        <begin position="178"/>
        <end position="198"/>
    </location>
</feature>
<feature type="transmembrane region" description="Helical" evidence="2">
    <location>
        <begin position="226"/>
        <end position="246"/>
    </location>
</feature>
<feature type="transmembrane region" description="Helical" evidence="2">
    <location>
        <begin position="288"/>
        <end position="308"/>
    </location>
</feature>
<feature type="transmembrane region" description="Helical" evidence="2">
    <location>
        <begin position="320"/>
        <end position="340"/>
    </location>
</feature>
<feature type="transmembrane region" description="Helical" evidence="2">
    <location>
        <begin position="347"/>
        <end position="367"/>
    </location>
</feature>
<feature type="binding site" description="axial binding residue" evidence="2">
    <location>
        <position position="83"/>
    </location>
    <ligand>
        <name>heme b</name>
        <dbReference type="ChEBI" id="CHEBI:60344"/>
        <label>b562</label>
    </ligand>
    <ligandPart>
        <name>Fe</name>
        <dbReference type="ChEBI" id="CHEBI:18248"/>
    </ligandPart>
</feature>
<feature type="binding site" description="axial binding residue" evidence="2">
    <location>
        <position position="97"/>
    </location>
    <ligand>
        <name>heme b</name>
        <dbReference type="ChEBI" id="CHEBI:60344"/>
        <label>b566</label>
    </ligand>
    <ligandPart>
        <name>Fe</name>
        <dbReference type="ChEBI" id="CHEBI:18248"/>
    </ligandPart>
</feature>
<feature type="binding site" description="axial binding residue" evidence="2">
    <location>
        <position position="182"/>
    </location>
    <ligand>
        <name>heme b</name>
        <dbReference type="ChEBI" id="CHEBI:60344"/>
        <label>b562</label>
    </ligand>
    <ligandPart>
        <name>Fe</name>
        <dbReference type="ChEBI" id="CHEBI:18248"/>
    </ligandPart>
</feature>
<feature type="binding site" description="axial binding residue" evidence="2">
    <location>
        <position position="196"/>
    </location>
    <ligand>
        <name>heme b</name>
        <dbReference type="ChEBI" id="CHEBI:60344"/>
        <label>b566</label>
    </ligand>
    <ligandPart>
        <name>Fe</name>
        <dbReference type="ChEBI" id="CHEBI:18248"/>
    </ligandPart>
</feature>
<feature type="binding site" evidence="2">
    <location>
        <position position="201"/>
    </location>
    <ligand>
        <name>a ubiquinone</name>
        <dbReference type="ChEBI" id="CHEBI:16389"/>
    </ligand>
</feature>
<feature type="sequence variant" description="In strain: Isolate Y6.">
    <original>H</original>
    <variation>R</variation>
    <location>
        <position position="313"/>
    </location>
</feature>
<feature type="sequence variant" description="In strain: Isolate Y6.">
    <original>R</original>
    <variation>W</variation>
    <location>
        <position position="318"/>
    </location>
</feature>
<protein>
    <recommendedName>
        <fullName>Cytochrome b</fullName>
    </recommendedName>
    <alternativeName>
        <fullName>Complex III subunit 3</fullName>
    </alternativeName>
    <alternativeName>
        <fullName>Complex III subunit III</fullName>
    </alternativeName>
    <alternativeName>
        <fullName>Cytochrome b-c1 complex subunit 3</fullName>
    </alternativeName>
    <alternativeName>
        <fullName>Ubiquinol-cytochrome-c reductase complex cytochrome b subunit</fullName>
    </alternativeName>
</protein>
<dbReference type="EMBL" id="AB126250">
    <property type="protein sequence ID" value="BAD95567.1"/>
    <property type="molecule type" value="Genomic_DNA"/>
</dbReference>
<dbReference type="EMBL" id="AB126251">
    <property type="protein sequence ID" value="BAD95568.1"/>
    <property type="molecule type" value="Genomic_DNA"/>
</dbReference>
<dbReference type="SMR" id="Q564N8"/>
<dbReference type="GO" id="GO:0005743">
    <property type="term" value="C:mitochondrial inner membrane"/>
    <property type="evidence" value="ECO:0007669"/>
    <property type="project" value="UniProtKB-SubCell"/>
</dbReference>
<dbReference type="GO" id="GO:0045275">
    <property type="term" value="C:respiratory chain complex III"/>
    <property type="evidence" value="ECO:0007669"/>
    <property type="project" value="InterPro"/>
</dbReference>
<dbReference type="GO" id="GO:0046872">
    <property type="term" value="F:metal ion binding"/>
    <property type="evidence" value="ECO:0007669"/>
    <property type="project" value="UniProtKB-KW"/>
</dbReference>
<dbReference type="GO" id="GO:0008121">
    <property type="term" value="F:ubiquinol-cytochrome-c reductase activity"/>
    <property type="evidence" value="ECO:0007669"/>
    <property type="project" value="InterPro"/>
</dbReference>
<dbReference type="GO" id="GO:0006122">
    <property type="term" value="P:mitochondrial electron transport, ubiquinol to cytochrome c"/>
    <property type="evidence" value="ECO:0007669"/>
    <property type="project" value="TreeGrafter"/>
</dbReference>
<dbReference type="CDD" id="cd00290">
    <property type="entry name" value="cytochrome_b_C"/>
    <property type="match status" value="1"/>
</dbReference>
<dbReference type="CDD" id="cd00284">
    <property type="entry name" value="Cytochrome_b_N"/>
    <property type="match status" value="1"/>
</dbReference>
<dbReference type="FunFam" id="1.20.810.10:FF:000002">
    <property type="entry name" value="Cytochrome b"/>
    <property type="match status" value="1"/>
</dbReference>
<dbReference type="Gene3D" id="1.20.810.10">
    <property type="entry name" value="Cytochrome Bc1 Complex, Chain C"/>
    <property type="match status" value="1"/>
</dbReference>
<dbReference type="InterPro" id="IPR005798">
    <property type="entry name" value="Cyt_b/b6_C"/>
</dbReference>
<dbReference type="InterPro" id="IPR036150">
    <property type="entry name" value="Cyt_b/b6_C_sf"/>
</dbReference>
<dbReference type="InterPro" id="IPR005797">
    <property type="entry name" value="Cyt_b/b6_N"/>
</dbReference>
<dbReference type="InterPro" id="IPR027387">
    <property type="entry name" value="Cytb/b6-like_sf"/>
</dbReference>
<dbReference type="InterPro" id="IPR030689">
    <property type="entry name" value="Cytochrome_b"/>
</dbReference>
<dbReference type="InterPro" id="IPR048260">
    <property type="entry name" value="Cytochrome_b_C_euk/bac"/>
</dbReference>
<dbReference type="InterPro" id="IPR048259">
    <property type="entry name" value="Cytochrome_b_N_euk/bac"/>
</dbReference>
<dbReference type="InterPro" id="IPR016174">
    <property type="entry name" value="Di-haem_cyt_TM"/>
</dbReference>
<dbReference type="PANTHER" id="PTHR19271">
    <property type="entry name" value="CYTOCHROME B"/>
    <property type="match status" value="1"/>
</dbReference>
<dbReference type="PANTHER" id="PTHR19271:SF16">
    <property type="entry name" value="CYTOCHROME B"/>
    <property type="match status" value="1"/>
</dbReference>
<dbReference type="Pfam" id="PF00032">
    <property type="entry name" value="Cytochrom_B_C"/>
    <property type="match status" value="1"/>
</dbReference>
<dbReference type="Pfam" id="PF00033">
    <property type="entry name" value="Cytochrome_B"/>
    <property type="match status" value="1"/>
</dbReference>
<dbReference type="PIRSF" id="PIRSF038885">
    <property type="entry name" value="COB"/>
    <property type="match status" value="1"/>
</dbReference>
<dbReference type="SUPFAM" id="SSF81648">
    <property type="entry name" value="a domain/subunit of cytochrome bc1 complex (Ubiquinol-cytochrome c reductase)"/>
    <property type="match status" value="1"/>
</dbReference>
<dbReference type="SUPFAM" id="SSF81342">
    <property type="entry name" value="Transmembrane di-heme cytochromes"/>
    <property type="match status" value="1"/>
</dbReference>
<dbReference type="PROSITE" id="PS51003">
    <property type="entry name" value="CYTB_CTER"/>
    <property type="match status" value="1"/>
</dbReference>
<dbReference type="PROSITE" id="PS51002">
    <property type="entry name" value="CYTB_NTER"/>
    <property type="match status" value="1"/>
</dbReference>
<gene>
    <name type="primary">MT-CYB</name>
    <name type="synonym">COB</name>
    <name type="synonym">CYTB</name>
    <name type="synonym">MTCYB</name>
</gene>
<evidence type="ECO:0000250" key="1"/>
<evidence type="ECO:0000250" key="2">
    <source>
        <dbReference type="UniProtKB" id="P00157"/>
    </source>
</evidence>
<evidence type="ECO:0000255" key="3">
    <source>
        <dbReference type="PROSITE-ProRule" id="PRU00967"/>
    </source>
</evidence>
<evidence type="ECO:0000255" key="4">
    <source>
        <dbReference type="PROSITE-ProRule" id="PRU00968"/>
    </source>
</evidence>
<organism>
    <name type="scientific">Hylopetes lepidus</name>
    <name type="common">Gray-cheeked pygmy flying squirrel</name>
    <name type="synonym">Hylopetes sagitta</name>
    <dbReference type="NCBI Taxonomy" id="254706"/>
    <lineage>
        <taxon>Eukaryota</taxon>
        <taxon>Metazoa</taxon>
        <taxon>Chordata</taxon>
        <taxon>Craniata</taxon>
        <taxon>Vertebrata</taxon>
        <taxon>Euteleostomi</taxon>
        <taxon>Mammalia</taxon>
        <taxon>Eutheria</taxon>
        <taxon>Euarchontoglires</taxon>
        <taxon>Glires</taxon>
        <taxon>Rodentia</taxon>
        <taxon>Sciuromorpha</taxon>
        <taxon>Sciuridae</taxon>
        <taxon>Sciurinae</taxon>
        <taxon>Pteromyini</taxon>
        <taxon>Hylopetes</taxon>
    </lineage>
</organism>
<comment type="function">
    <text evidence="2">Component of the ubiquinol-cytochrome c reductase complex (complex III or cytochrome b-c1 complex) that is part of the mitochondrial respiratory chain. The b-c1 complex mediates electron transfer from ubiquinol to cytochrome c. Contributes to the generation of a proton gradient across the mitochondrial membrane that is then used for ATP synthesis.</text>
</comment>
<comment type="cofactor">
    <cofactor evidence="2">
        <name>heme b</name>
        <dbReference type="ChEBI" id="CHEBI:60344"/>
    </cofactor>
    <text evidence="2">Binds 2 heme b groups non-covalently.</text>
</comment>
<comment type="subunit">
    <text evidence="2">The cytochrome bc1 complex contains 11 subunits: 3 respiratory subunits (MT-CYB, CYC1 and UQCRFS1), 2 core proteins (UQCRC1 and UQCRC2) and 6 low-molecular weight proteins (UQCRH/QCR6, UQCRB/QCR7, UQCRQ/QCR8, UQCR10/QCR9, UQCR11/QCR10 and a cleavage product of UQCRFS1). This cytochrome bc1 complex then forms a dimer.</text>
</comment>
<comment type="subcellular location">
    <subcellularLocation>
        <location evidence="2">Mitochondrion inner membrane</location>
        <topology evidence="2">Multi-pass membrane protein</topology>
    </subcellularLocation>
</comment>
<comment type="miscellaneous">
    <text evidence="1">Heme 1 (or BL or b562) is low-potential and absorbs at about 562 nm, and heme 2 (or BH or b566) is high-potential and absorbs at about 566 nm.</text>
</comment>
<comment type="similarity">
    <text evidence="3 4">Belongs to the cytochrome b family.</text>
</comment>
<comment type="caution">
    <text evidence="2">The full-length protein contains only eight transmembrane helices, not nine as predicted by bioinformatics tools.</text>
</comment>
<keyword id="KW-0249">Electron transport</keyword>
<keyword id="KW-0349">Heme</keyword>
<keyword id="KW-0408">Iron</keyword>
<keyword id="KW-0472">Membrane</keyword>
<keyword id="KW-0479">Metal-binding</keyword>
<keyword id="KW-0496">Mitochondrion</keyword>
<keyword id="KW-0999">Mitochondrion inner membrane</keyword>
<keyword id="KW-0679">Respiratory chain</keyword>
<keyword id="KW-0812">Transmembrane</keyword>
<keyword id="KW-1133">Transmembrane helix</keyword>
<keyword id="KW-0813">Transport</keyword>
<keyword id="KW-0830">Ubiquinone</keyword>
<sequence>MTNIRKTHPLIKIVNHSFIDLPTPSNISAWWNFGSLLGFCLIIQIVTGLFLAMHYTSDTMTAFSSVTHICRDVNYGWLIRYMHANGASMFFICLFLHVGRGLYYGSYTYLETWNIGVILLFAVMATAFMGYVLPRGQMSFWGATVITNLLSAIPYIGTTLVEWIWGGFSVDKATLTRFFAFHFVLPFVIAALAMIHLLFLHETGSNNPSGLVSDSDKIPFHPYFSIKDLLGALILLLAFMNLVLFTPDLLGDPDNYIPANPLNTPPHIKPEWYFLFAYTILRSIPNKLGGVLALVFSILILMLFPILHMSKQHSMMFRPLSQCFFWILVADLFTLTWIGGQPVEYPFITIGQVASILYFTIILIILPSISLLENKLLKW</sequence>
<name>CYB_HYLLP</name>
<proteinExistence type="inferred from homology"/>
<geneLocation type="mitochondrion"/>
<accession>Q564N8</accession>
<accession>Q564N7</accession>
<reference key="1">
    <citation type="journal article" date="2004" name="Can. J. Zool.">
        <title>Phylogenetic position of the Kashmir flying squirrel, Hylopetes fimbriatus (=Eoglaucomys fimbriatus), in the subfamily Pteromyinae.</title>
        <authorList>
            <person name="Oshida T."/>
            <person name="Shafique C.M."/>
            <person name="Barkati S."/>
            <person name="Yasuda M."/>
            <person name="Hussein N.A."/>
            <person name="Endo H."/>
            <person name="Yanagawa H."/>
            <person name="Masuda R."/>
        </authorList>
    </citation>
    <scope>NUCLEOTIDE SEQUENCE [GENOMIC DNA]</scope>
    <source>
        <strain>Isolate Y4</strain>
        <strain>Isolate Y6</strain>
    </source>
</reference>